<organism>
    <name type="scientific">Mus musculus</name>
    <name type="common">Mouse</name>
    <dbReference type="NCBI Taxonomy" id="10090"/>
    <lineage>
        <taxon>Eukaryota</taxon>
        <taxon>Metazoa</taxon>
        <taxon>Chordata</taxon>
        <taxon>Craniata</taxon>
        <taxon>Vertebrata</taxon>
        <taxon>Euteleostomi</taxon>
        <taxon>Mammalia</taxon>
        <taxon>Eutheria</taxon>
        <taxon>Euarchontoglires</taxon>
        <taxon>Glires</taxon>
        <taxon>Rodentia</taxon>
        <taxon>Myomorpha</taxon>
        <taxon>Muroidea</taxon>
        <taxon>Muridae</taxon>
        <taxon>Murinae</taxon>
        <taxon>Mus</taxon>
        <taxon>Mus</taxon>
    </lineage>
</organism>
<accession>Q920B9</accession>
<accession>Q3TZ48</accession>
<accession>Q3UFH0</accession>
<accession>Q921H4</accession>
<feature type="initiator methionine" description="Removed" evidence="2">
    <location>
        <position position="1"/>
    </location>
</feature>
<feature type="chain" id="PRO_0000245170" description="FACT complex subunit SPT16">
    <location>
        <begin position="2"/>
        <end position="1047"/>
    </location>
</feature>
<feature type="region of interest" description="Disordered" evidence="4">
    <location>
        <begin position="491"/>
        <end position="518"/>
    </location>
</feature>
<feature type="region of interest" description="Disordered" evidence="4">
    <location>
        <begin position="918"/>
        <end position="1047"/>
    </location>
</feature>
<feature type="coiled-coil region" evidence="3">
    <location>
        <begin position="465"/>
        <end position="507"/>
    </location>
</feature>
<feature type="compositionally biased region" description="Polar residues" evidence="4">
    <location>
        <begin position="499"/>
        <end position="514"/>
    </location>
</feature>
<feature type="compositionally biased region" description="Acidic residues" evidence="4">
    <location>
        <begin position="927"/>
        <end position="973"/>
    </location>
</feature>
<feature type="compositionally biased region" description="Basic and acidic residues" evidence="4">
    <location>
        <begin position="985"/>
        <end position="1005"/>
    </location>
</feature>
<feature type="compositionally biased region" description="Low complexity" evidence="4">
    <location>
        <begin position="1024"/>
        <end position="1039"/>
    </location>
</feature>
<feature type="modified residue" description="N-acetylalanine" evidence="2">
    <location>
        <position position="2"/>
    </location>
</feature>
<feature type="modified residue" description="N6-acetyllysine" evidence="2">
    <location>
        <position position="139"/>
    </location>
</feature>
<feature type="modified residue" description="Phosphoserine" evidence="2">
    <location>
        <position position="188"/>
    </location>
</feature>
<feature type="modified residue" description="N6-acetyllysine" evidence="8">
    <location>
        <position position="196"/>
    </location>
</feature>
<feature type="modified residue" description="N6-acetyllysine" evidence="2">
    <location>
        <position position="223"/>
    </location>
</feature>
<feature type="modified residue" description="Phosphoserine" evidence="2">
    <location>
        <position position="455"/>
    </location>
</feature>
<feature type="modified residue" description="Phosphoserine" evidence="2">
    <location>
        <position position="508"/>
    </location>
</feature>
<feature type="modified residue" description="N6-acetyllysine; alternate" evidence="8">
    <location>
        <position position="513"/>
    </location>
</feature>
<feature type="modified residue" description="Phosphoserine" evidence="2">
    <location>
        <position position="650"/>
    </location>
</feature>
<feature type="modified residue" description="Phosphoserine" evidence="2">
    <location>
        <position position="658"/>
    </location>
</feature>
<feature type="modified residue" description="N6-acetyllysine" evidence="2">
    <location>
        <position position="732"/>
    </location>
</feature>
<feature type="modified residue" description="N6-acetyllysine" evidence="2">
    <location>
        <position position="786"/>
    </location>
</feature>
<feature type="modified residue" description="Phosphothreonine" evidence="2">
    <location>
        <position position="903"/>
    </location>
</feature>
<feature type="modified residue" description="N6-acetyllysine" evidence="2">
    <location>
        <position position="904"/>
    </location>
</feature>
<feature type="modified residue" description="Phosphoserine" evidence="2">
    <location>
        <position position="979"/>
    </location>
</feature>
<feature type="modified residue" description="Phosphoserine" evidence="2">
    <location>
        <position position="982"/>
    </location>
</feature>
<feature type="modified residue" description="Phosphoserine" evidence="2">
    <location>
        <position position="986"/>
    </location>
</feature>
<feature type="modified residue" description="Phosphoserine" evidence="2">
    <location>
        <position position="1015"/>
    </location>
</feature>
<feature type="cross-link" description="Glycyl lysine isopeptide (Lys-Gly) (interchain with G-Cter in SUMO2)" evidence="2">
    <location>
        <position position="497"/>
    </location>
</feature>
<feature type="cross-link" description="Glycyl lysine isopeptide (Lys-Gly) (interchain with G-Cter in SUMO2); alternate" evidence="2">
    <location>
        <position position="513"/>
    </location>
</feature>
<feature type="cross-link" description="Glycyl lysine isopeptide (Lys-Gly) (interchain with G-Cter in SUMO2)" evidence="2">
    <location>
        <position position="647"/>
    </location>
</feature>
<feature type="sequence conflict" description="In Ref. 1; AAL04452." evidence="7" ref="1">
    <original>R</original>
    <variation>G</variation>
    <location>
        <position position="453"/>
    </location>
</feature>
<feature type="sequence conflict" description="In Ref. 1; AAL04452." evidence="7" ref="1">
    <original>K</original>
    <variation>E</variation>
    <location>
        <position position="862"/>
    </location>
</feature>
<dbReference type="EMBL" id="AF323667">
    <property type="protein sequence ID" value="AAL04452.1"/>
    <property type="molecule type" value="mRNA"/>
</dbReference>
<dbReference type="EMBL" id="AK148506">
    <property type="protein sequence ID" value="BAE28591.1"/>
    <property type="molecule type" value="mRNA"/>
</dbReference>
<dbReference type="EMBL" id="AK158116">
    <property type="protein sequence ID" value="BAE34362.1"/>
    <property type="molecule type" value="mRNA"/>
</dbReference>
<dbReference type="EMBL" id="BC012433">
    <property type="protein sequence ID" value="AAH12433.1"/>
    <property type="status" value="ALT_INIT"/>
    <property type="molecule type" value="mRNA"/>
</dbReference>
<dbReference type="CCDS" id="CCDS27051.1"/>
<dbReference type="RefSeq" id="NP_291096.2">
    <property type="nucleotide sequence ID" value="NM_033618.3"/>
</dbReference>
<dbReference type="SMR" id="Q920B9"/>
<dbReference type="BioGRID" id="227853">
    <property type="interactions" value="30"/>
</dbReference>
<dbReference type="ComplexPortal" id="CPX-433">
    <property type="entry name" value="FACT complex"/>
</dbReference>
<dbReference type="DIP" id="DIP-55972N"/>
<dbReference type="FunCoup" id="Q920B9">
    <property type="interactions" value="4882"/>
</dbReference>
<dbReference type="IntAct" id="Q920B9">
    <property type="interactions" value="14"/>
</dbReference>
<dbReference type="MINT" id="Q920B9"/>
<dbReference type="STRING" id="10090.ENSMUSP00000042283"/>
<dbReference type="MEROPS" id="M24.974"/>
<dbReference type="GlyGen" id="Q920B9">
    <property type="glycosylation" value="2 sites, 1 N-linked glycan (1 site), 1 O-linked glycan (1 site)"/>
</dbReference>
<dbReference type="iPTMnet" id="Q920B9"/>
<dbReference type="PhosphoSitePlus" id="Q920B9"/>
<dbReference type="jPOST" id="Q920B9"/>
<dbReference type="PaxDb" id="10090-ENSMUSP00000042283"/>
<dbReference type="PeptideAtlas" id="Q920B9"/>
<dbReference type="ProteomicsDB" id="257381"/>
<dbReference type="Pumba" id="Q920B9"/>
<dbReference type="DNASU" id="114741"/>
<dbReference type="GeneID" id="114741"/>
<dbReference type="KEGG" id="mmu:114741"/>
<dbReference type="AGR" id="MGI:1890948"/>
<dbReference type="CTD" id="114741"/>
<dbReference type="MGI" id="MGI:1890948">
    <property type="gene designation" value="Supt16"/>
</dbReference>
<dbReference type="eggNOG" id="KOG1189">
    <property type="taxonomic scope" value="Eukaryota"/>
</dbReference>
<dbReference type="InParanoid" id="Q920B9"/>
<dbReference type="OrthoDB" id="10251642at2759"/>
<dbReference type="PhylomeDB" id="Q920B9"/>
<dbReference type="Reactome" id="R-MMU-112382">
    <property type="pathway name" value="Formation of RNA Pol II elongation complex"/>
</dbReference>
<dbReference type="Reactome" id="R-MMU-674695">
    <property type="pathway name" value="RNA Polymerase II Pre-transcription Events"/>
</dbReference>
<dbReference type="Reactome" id="R-MMU-6796648">
    <property type="pathway name" value="TP53 Regulates Transcription of DNA Repair Genes"/>
</dbReference>
<dbReference type="Reactome" id="R-MMU-6804756">
    <property type="pathway name" value="Regulation of TP53 Activity through Phosphorylation"/>
</dbReference>
<dbReference type="Reactome" id="R-MMU-75955">
    <property type="pathway name" value="RNA Polymerase II Transcription Elongation"/>
</dbReference>
<dbReference type="BioGRID-ORCS" id="114741">
    <property type="hits" value="25 hits in 112 CRISPR screens"/>
</dbReference>
<dbReference type="ChiTaRS" id="Supt16">
    <property type="organism name" value="mouse"/>
</dbReference>
<dbReference type="PRO" id="PR:Q920B9"/>
<dbReference type="Proteomes" id="UP000000589">
    <property type="component" value="Unplaced"/>
</dbReference>
<dbReference type="RNAct" id="Q920B9">
    <property type="molecule type" value="protein"/>
</dbReference>
<dbReference type="GO" id="GO:0035101">
    <property type="term" value="C:FACT complex"/>
    <property type="evidence" value="ECO:0000266"/>
    <property type="project" value="ComplexPortal"/>
</dbReference>
<dbReference type="GO" id="GO:0005634">
    <property type="term" value="C:nucleus"/>
    <property type="evidence" value="ECO:0000266"/>
    <property type="project" value="ComplexPortal"/>
</dbReference>
<dbReference type="GO" id="GO:0006281">
    <property type="term" value="P:DNA repair"/>
    <property type="evidence" value="ECO:0007669"/>
    <property type="project" value="UniProtKB-KW"/>
</dbReference>
<dbReference type="GO" id="GO:0006260">
    <property type="term" value="P:DNA replication"/>
    <property type="evidence" value="ECO:0007669"/>
    <property type="project" value="UniProtKB-KW"/>
</dbReference>
<dbReference type="GO" id="GO:0006334">
    <property type="term" value="P:nucleosome assembly"/>
    <property type="evidence" value="ECO:0000303"/>
    <property type="project" value="ComplexPortal"/>
</dbReference>
<dbReference type="GO" id="GO:0006337">
    <property type="term" value="P:nucleosome disassembly"/>
    <property type="evidence" value="ECO:0000266"/>
    <property type="project" value="ComplexPortal"/>
</dbReference>
<dbReference type="CDD" id="cd01091">
    <property type="entry name" value="CDC68-like"/>
    <property type="match status" value="1"/>
</dbReference>
<dbReference type="FunFam" id="2.30.29.150:FF:000003">
    <property type="entry name" value="FACT complex subunit SPT16"/>
    <property type="match status" value="1"/>
</dbReference>
<dbReference type="FunFam" id="2.30.29.30:FF:000017">
    <property type="entry name" value="FACT complex subunit SPT16"/>
    <property type="match status" value="1"/>
</dbReference>
<dbReference type="FunFam" id="2.30.29.210:FF:000001">
    <property type="entry name" value="FACT complex subunit spt16"/>
    <property type="match status" value="1"/>
</dbReference>
<dbReference type="FunFam" id="3.90.230.10:FF:000005">
    <property type="entry name" value="FACT complex subunit spt16"/>
    <property type="match status" value="1"/>
</dbReference>
<dbReference type="FunFam" id="3.40.350.10:FF:000005">
    <property type="entry name" value="SPT16 homolog, facilitates chromatin-remodeling subunit"/>
    <property type="match status" value="1"/>
</dbReference>
<dbReference type="Gene3D" id="2.30.29.150">
    <property type="match status" value="1"/>
</dbReference>
<dbReference type="Gene3D" id="3.90.230.10">
    <property type="entry name" value="Creatinase/methionine aminopeptidase superfamily"/>
    <property type="match status" value="1"/>
</dbReference>
<dbReference type="Gene3D" id="3.40.350.10">
    <property type="entry name" value="Creatinase/prolidase N-terminal domain"/>
    <property type="match status" value="1"/>
</dbReference>
<dbReference type="Gene3D" id="2.30.29.210">
    <property type="entry name" value="FACT complex subunit Spt16p/Cdc68p"/>
    <property type="match status" value="1"/>
</dbReference>
<dbReference type="Gene3D" id="2.30.29.30">
    <property type="entry name" value="Pleckstrin-homology domain (PH domain)/Phosphotyrosine-binding domain (PTB)"/>
    <property type="match status" value="1"/>
</dbReference>
<dbReference type="InterPro" id="IPR029149">
    <property type="entry name" value="Creatin/AminoP/Spt16_N"/>
</dbReference>
<dbReference type="InterPro" id="IPR036005">
    <property type="entry name" value="Creatinase/aminopeptidase-like"/>
</dbReference>
<dbReference type="InterPro" id="IPR029148">
    <property type="entry name" value="FACT-SPT16_Nlobe"/>
</dbReference>
<dbReference type="InterPro" id="IPR056595">
    <property type="entry name" value="Fact-SPT16_PH"/>
</dbReference>
<dbReference type="InterPro" id="IPR048969">
    <property type="entry name" value="FACT_SPT16_C"/>
</dbReference>
<dbReference type="InterPro" id="IPR013953">
    <property type="entry name" value="FACT_SPT16_M"/>
</dbReference>
<dbReference type="InterPro" id="IPR000994">
    <property type="entry name" value="Pept_M24"/>
</dbReference>
<dbReference type="InterPro" id="IPR011993">
    <property type="entry name" value="PH-like_dom_sf"/>
</dbReference>
<dbReference type="InterPro" id="IPR013719">
    <property type="entry name" value="RTT106/SPT16-like_middle_dom"/>
</dbReference>
<dbReference type="InterPro" id="IPR040258">
    <property type="entry name" value="Spt16"/>
</dbReference>
<dbReference type="InterPro" id="IPR033825">
    <property type="entry name" value="Spt16_M24"/>
</dbReference>
<dbReference type="PANTHER" id="PTHR13980">
    <property type="entry name" value="CDC68 RELATED"/>
    <property type="match status" value="1"/>
</dbReference>
<dbReference type="PANTHER" id="PTHR13980:SF15">
    <property type="entry name" value="FACT COMPLEX SUBUNIT SPT16"/>
    <property type="match status" value="1"/>
</dbReference>
<dbReference type="Pfam" id="PF14826">
    <property type="entry name" value="FACT-Spt16_Nlob"/>
    <property type="match status" value="1"/>
</dbReference>
<dbReference type="Pfam" id="PF00557">
    <property type="entry name" value="Peptidase_M24"/>
    <property type="match status" value="1"/>
</dbReference>
<dbReference type="Pfam" id="PF24824">
    <property type="entry name" value="PH_SPT16"/>
    <property type="match status" value="1"/>
</dbReference>
<dbReference type="Pfam" id="PF08512">
    <property type="entry name" value="Rttp106-like_middle"/>
    <property type="match status" value="1"/>
</dbReference>
<dbReference type="Pfam" id="PF08644">
    <property type="entry name" value="SPT16"/>
    <property type="match status" value="1"/>
</dbReference>
<dbReference type="Pfam" id="PF21091">
    <property type="entry name" value="SPT16_C"/>
    <property type="match status" value="1"/>
</dbReference>
<dbReference type="SMART" id="SM01285">
    <property type="entry name" value="FACT-Spt16_Nlob"/>
    <property type="match status" value="1"/>
</dbReference>
<dbReference type="SMART" id="SM01287">
    <property type="entry name" value="Rtt106"/>
    <property type="match status" value="1"/>
</dbReference>
<dbReference type="SMART" id="SM01286">
    <property type="entry name" value="SPT16"/>
    <property type="match status" value="1"/>
</dbReference>
<dbReference type="SUPFAM" id="SSF55920">
    <property type="entry name" value="Creatinase/aminopeptidase"/>
    <property type="match status" value="1"/>
</dbReference>
<comment type="function">
    <text evidence="2 6">Component of the FACT complex, a general chromatin factor that acts to reorganize nucleosomes. The FACT complex is involved in multiple processes that require DNA as a template such as mRNA elongation, DNA replication and DNA repair. During transcription elongation the FACT complex acts as a histone chaperone that both destabilizes and restores nucleosomal structure. It facilitates the passage of RNA polymerase II and transcription by promoting the dissociation of one histone H2A-H2B dimer from the nucleosome, then subsequently promotes the reestablishment of the nucleosome following the passage of RNA polymerase II. The FACT complex is probably also involved in phosphorylation of 'Ser-392' of p53/TP53 via its association with CK2 (casein kinase II).</text>
</comment>
<comment type="subunit">
    <text evidence="2 6">Interacts with MYOG (via C-terminal region) (PubMed:23364797). Component of the FACT complex, a stable heterodimer of SSRP1 and SUPT16H. Also a component of a CK2-SPT16-SSRP1 complex which forms following UV irradiation, composed of SSRP1, SUPT16H, CSNK2A1, CSNK2A2 and CSNK2B. Interacts with NEK9. Binds to histone H2A-H2B. Identified in a centromere complex containing histones H2A, H2B and H4, and at least CENPA, CENPB, CENPC, CENPT, CENPN, HJURP, SUPT16H, SSRP1 and RSF1. Interacts with GTF2E2 (By similarity).</text>
</comment>
<comment type="subcellular location">
    <subcellularLocation>
        <location>Nucleus</location>
    </subcellularLocation>
    <subcellularLocation>
        <location>Chromosome</location>
    </subcellularLocation>
    <text>Colocalizes with RNA polymerase II on chromatin. Recruited to actively transcribed loci.</text>
</comment>
<comment type="tissue specificity">
    <text evidence="5">Widely expressed. Expressed in brain, liver, heart, kidneys, lungs, spleen, thymus, ovary, and testes, with highest levels of expression observed in thymus.</text>
</comment>
<comment type="domain">
    <text evidence="1">The C-terminal Glu-rich acidic region is essential for FACT activity.</text>
</comment>
<comment type="PTM">
    <text>ADP-ribosylated. ADP-ribosylation by PARP1 is induced by genotoxic stress and correlates with dissociation of FACT from chromatin.</text>
</comment>
<comment type="similarity">
    <text evidence="7">Belongs to the peptidase M24 family. SPT16 subfamily.</text>
</comment>
<comment type="caution">
    <text evidence="7">Although related to the peptidase M24 family, this protein lacks conserved active site residues suggesting that it may lack peptidase activity.</text>
</comment>
<comment type="sequence caution" evidence="7">
    <conflict type="erroneous initiation">
        <sequence resource="EMBL-CDS" id="AAH12433"/>
    </conflict>
    <text>Truncated N-terminus.</text>
</comment>
<evidence type="ECO:0000250" key="1"/>
<evidence type="ECO:0000250" key="2">
    <source>
        <dbReference type="UniProtKB" id="Q9Y5B9"/>
    </source>
</evidence>
<evidence type="ECO:0000255" key="3"/>
<evidence type="ECO:0000256" key="4">
    <source>
        <dbReference type="SAM" id="MobiDB-lite"/>
    </source>
</evidence>
<evidence type="ECO:0000269" key="5">
    <source>
    </source>
</evidence>
<evidence type="ECO:0000269" key="6">
    <source>
    </source>
</evidence>
<evidence type="ECO:0000305" key="7"/>
<evidence type="ECO:0007744" key="8">
    <source>
    </source>
</evidence>
<protein>
    <recommendedName>
        <fullName>FACT complex subunit SPT16</fullName>
    </recommendedName>
    <alternativeName>
        <fullName>Chromatin-specific transcription elongation factor 140 kDa subunit</fullName>
    </alternativeName>
    <alternativeName>
        <fullName>FACT 140 kDa subunit</fullName>
    </alternativeName>
    <alternativeName>
        <fullName>FACTp140</fullName>
    </alternativeName>
    <alternativeName>
        <fullName>Facilitates chromatin transcription complex subunit SPT16</fullName>
    </alternativeName>
</protein>
<reference key="1">
    <citation type="journal article" date="2001" name="Mamm. Genome">
        <title>The mouse Supt16h/Fact140 gene, encoding part of the FACT chromatin transcription complex, maps close to Tcra and is highly expressed in thymus.</title>
        <authorList>
            <person name="McGuire M.V."/>
            <person name="Suthipinijtham P."/>
            <person name="Gascoigne N.R.J."/>
        </authorList>
    </citation>
    <scope>NUCLEOTIDE SEQUENCE [MRNA]</scope>
    <scope>TISSUE SPECIFICITY</scope>
</reference>
<reference key="2">
    <citation type="journal article" date="2005" name="Science">
        <title>The transcriptional landscape of the mammalian genome.</title>
        <authorList>
            <person name="Carninci P."/>
            <person name="Kasukawa T."/>
            <person name="Katayama S."/>
            <person name="Gough J."/>
            <person name="Frith M.C."/>
            <person name="Maeda N."/>
            <person name="Oyama R."/>
            <person name="Ravasi T."/>
            <person name="Lenhard B."/>
            <person name="Wells C."/>
            <person name="Kodzius R."/>
            <person name="Shimokawa K."/>
            <person name="Bajic V.B."/>
            <person name="Brenner S.E."/>
            <person name="Batalov S."/>
            <person name="Forrest A.R."/>
            <person name="Zavolan M."/>
            <person name="Davis M.J."/>
            <person name="Wilming L.G."/>
            <person name="Aidinis V."/>
            <person name="Allen J.E."/>
            <person name="Ambesi-Impiombato A."/>
            <person name="Apweiler R."/>
            <person name="Aturaliya R.N."/>
            <person name="Bailey T.L."/>
            <person name="Bansal M."/>
            <person name="Baxter L."/>
            <person name="Beisel K.W."/>
            <person name="Bersano T."/>
            <person name="Bono H."/>
            <person name="Chalk A.M."/>
            <person name="Chiu K.P."/>
            <person name="Choudhary V."/>
            <person name="Christoffels A."/>
            <person name="Clutterbuck D.R."/>
            <person name="Crowe M.L."/>
            <person name="Dalla E."/>
            <person name="Dalrymple B.P."/>
            <person name="de Bono B."/>
            <person name="Della Gatta G."/>
            <person name="di Bernardo D."/>
            <person name="Down T."/>
            <person name="Engstrom P."/>
            <person name="Fagiolini M."/>
            <person name="Faulkner G."/>
            <person name="Fletcher C.F."/>
            <person name="Fukushima T."/>
            <person name="Furuno M."/>
            <person name="Futaki S."/>
            <person name="Gariboldi M."/>
            <person name="Georgii-Hemming P."/>
            <person name="Gingeras T.R."/>
            <person name="Gojobori T."/>
            <person name="Green R.E."/>
            <person name="Gustincich S."/>
            <person name="Harbers M."/>
            <person name="Hayashi Y."/>
            <person name="Hensch T.K."/>
            <person name="Hirokawa N."/>
            <person name="Hill D."/>
            <person name="Huminiecki L."/>
            <person name="Iacono M."/>
            <person name="Ikeo K."/>
            <person name="Iwama A."/>
            <person name="Ishikawa T."/>
            <person name="Jakt M."/>
            <person name="Kanapin A."/>
            <person name="Katoh M."/>
            <person name="Kawasawa Y."/>
            <person name="Kelso J."/>
            <person name="Kitamura H."/>
            <person name="Kitano H."/>
            <person name="Kollias G."/>
            <person name="Krishnan S.P."/>
            <person name="Kruger A."/>
            <person name="Kummerfeld S.K."/>
            <person name="Kurochkin I.V."/>
            <person name="Lareau L.F."/>
            <person name="Lazarevic D."/>
            <person name="Lipovich L."/>
            <person name="Liu J."/>
            <person name="Liuni S."/>
            <person name="McWilliam S."/>
            <person name="Madan Babu M."/>
            <person name="Madera M."/>
            <person name="Marchionni L."/>
            <person name="Matsuda H."/>
            <person name="Matsuzawa S."/>
            <person name="Miki H."/>
            <person name="Mignone F."/>
            <person name="Miyake S."/>
            <person name="Morris K."/>
            <person name="Mottagui-Tabar S."/>
            <person name="Mulder N."/>
            <person name="Nakano N."/>
            <person name="Nakauchi H."/>
            <person name="Ng P."/>
            <person name="Nilsson R."/>
            <person name="Nishiguchi S."/>
            <person name="Nishikawa S."/>
            <person name="Nori F."/>
            <person name="Ohara O."/>
            <person name="Okazaki Y."/>
            <person name="Orlando V."/>
            <person name="Pang K.C."/>
            <person name="Pavan W.J."/>
            <person name="Pavesi G."/>
            <person name="Pesole G."/>
            <person name="Petrovsky N."/>
            <person name="Piazza S."/>
            <person name="Reed J."/>
            <person name="Reid J.F."/>
            <person name="Ring B.Z."/>
            <person name="Ringwald M."/>
            <person name="Rost B."/>
            <person name="Ruan Y."/>
            <person name="Salzberg S.L."/>
            <person name="Sandelin A."/>
            <person name="Schneider C."/>
            <person name="Schoenbach C."/>
            <person name="Sekiguchi K."/>
            <person name="Semple C.A."/>
            <person name="Seno S."/>
            <person name="Sessa L."/>
            <person name="Sheng Y."/>
            <person name="Shibata Y."/>
            <person name="Shimada H."/>
            <person name="Shimada K."/>
            <person name="Silva D."/>
            <person name="Sinclair B."/>
            <person name="Sperling S."/>
            <person name="Stupka E."/>
            <person name="Sugiura K."/>
            <person name="Sultana R."/>
            <person name="Takenaka Y."/>
            <person name="Taki K."/>
            <person name="Tammoja K."/>
            <person name="Tan S.L."/>
            <person name="Tang S."/>
            <person name="Taylor M.S."/>
            <person name="Tegner J."/>
            <person name="Teichmann S.A."/>
            <person name="Ueda H.R."/>
            <person name="van Nimwegen E."/>
            <person name="Verardo R."/>
            <person name="Wei C.L."/>
            <person name="Yagi K."/>
            <person name="Yamanishi H."/>
            <person name="Zabarovsky E."/>
            <person name="Zhu S."/>
            <person name="Zimmer A."/>
            <person name="Hide W."/>
            <person name="Bult C."/>
            <person name="Grimmond S.M."/>
            <person name="Teasdale R.D."/>
            <person name="Liu E.T."/>
            <person name="Brusic V."/>
            <person name="Quackenbush J."/>
            <person name="Wahlestedt C."/>
            <person name="Mattick J.S."/>
            <person name="Hume D.A."/>
            <person name="Kai C."/>
            <person name="Sasaki D."/>
            <person name="Tomaru Y."/>
            <person name="Fukuda S."/>
            <person name="Kanamori-Katayama M."/>
            <person name="Suzuki M."/>
            <person name="Aoki J."/>
            <person name="Arakawa T."/>
            <person name="Iida J."/>
            <person name="Imamura K."/>
            <person name="Itoh M."/>
            <person name="Kato T."/>
            <person name="Kawaji H."/>
            <person name="Kawagashira N."/>
            <person name="Kawashima T."/>
            <person name="Kojima M."/>
            <person name="Kondo S."/>
            <person name="Konno H."/>
            <person name="Nakano K."/>
            <person name="Ninomiya N."/>
            <person name="Nishio T."/>
            <person name="Okada M."/>
            <person name="Plessy C."/>
            <person name="Shibata K."/>
            <person name="Shiraki T."/>
            <person name="Suzuki S."/>
            <person name="Tagami M."/>
            <person name="Waki K."/>
            <person name="Watahiki A."/>
            <person name="Okamura-Oho Y."/>
            <person name="Suzuki H."/>
            <person name="Kawai J."/>
            <person name="Hayashizaki Y."/>
        </authorList>
    </citation>
    <scope>NUCLEOTIDE SEQUENCE [LARGE SCALE MRNA] OF 1-637</scope>
    <source>
        <strain>C57BL/6J</strain>
        <tissue>Inner ear</tissue>
        <tissue>Pancreas</tissue>
    </source>
</reference>
<reference key="3">
    <citation type="journal article" date="2004" name="Genome Res.">
        <title>The status, quality, and expansion of the NIH full-length cDNA project: the Mammalian Gene Collection (MGC).</title>
        <authorList>
            <consortium name="The MGC Project Team"/>
        </authorList>
    </citation>
    <scope>NUCLEOTIDE SEQUENCE [LARGE SCALE MRNA] OF 803-1047</scope>
    <source>
        <strain>FVB/N</strain>
        <tissue>Mammary tumor</tissue>
    </source>
</reference>
<reference key="4">
    <citation type="journal article" date="2010" name="Cell">
        <title>A tissue-specific atlas of mouse protein phosphorylation and expression.</title>
        <authorList>
            <person name="Huttlin E.L."/>
            <person name="Jedrychowski M.P."/>
            <person name="Elias J.E."/>
            <person name="Goswami T."/>
            <person name="Rad R."/>
            <person name="Beausoleil S.A."/>
            <person name="Villen J."/>
            <person name="Haas W."/>
            <person name="Sowa M.E."/>
            <person name="Gygi S.P."/>
        </authorList>
    </citation>
    <scope>IDENTIFICATION BY MASS SPECTROMETRY [LARGE SCALE ANALYSIS]</scope>
    <source>
        <tissue>Kidney</tissue>
        <tissue>Liver</tissue>
        <tissue>Spleen</tissue>
    </source>
</reference>
<reference key="5">
    <citation type="journal article" date="2013" name="J. Biol. Chem.">
        <title>Myogenin recruits the histone chaperone facilitates chromatin transcription (FACT) to promote nucleosome disassembly at muscle-specific genes.</title>
        <authorList>
            <person name="Lolis A.A."/>
            <person name="Londhe P."/>
            <person name="Beggs B.C."/>
            <person name="Byrum S.D."/>
            <person name="Tackett A.J."/>
            <person name="Davie J.K."/>
        </authorList>
    </citation>
    <scope>FUNCTION</scope>
    <scope>INTERACTION WITH MYOG</scope>
</reference>
<reference key="6">
    <citation type="journal article" date="2013" name="Mol. Cell">
        <title>SIRT5-mediated lysine desuccinylation impacts diverse metabolic pathways.</title>
        <authorList>
            <person name="Park J."/>
            <person name="Chen Y."/>
            <person name="Tishkoff D.X."/>
            <person name="Peng C."/>
            <person name="Tan M."/>
            <person name="Dai L."/>
            <person name="Xie Z."/>
            <person name="Zhang Y."/>
            <person name="Zwaans B.M."/>
            <person name="Skinner M.E."/>
            <person name="Lombard D.B."/>
            <person name="Zhao Y."/>
        </authorList>
    </citation>
    <scope>ACETYLATION [LARGE SCALE ANALYSIS] AT LYS-196 AND LYS-513</scope>
    <scope>IDENTIFICATION BY MASS SPECTROMETRY [LARGE SCALE ANALYSIS]</scope>
    <source>
        <tissue>Embryonic fibroblast</tissue>
    </source>
</reference>
<proteinExistence type="evidence at protein level"/>
<keyword id="KW-0007">Acetylation</keyword>
<keyword id="KW-0013">ADP-ribosylation</keyword>
<keyword id="KW-0158">Chromosome</keyword>
<keyword id="KW-0175">Coiled coil</keyword>
<keyword id="KW-0227">DNA damage</keyword>
<keyword id="KW-0234">DNA repair</keyword>
<keyword id="KW-0235">DNA replication</keyword>
<keyword id="KW-1017">Isopeptide bond</keyword>
<keyword id="KW-0539">Nucleus</keyword>
<keyword id="KW-0597">Phosphoprotein</keyword>
<keyword id="KW-1185">Reference proteome</keyword>
<keyword id="KW-0804">Transcription</keyword>
<keyword id="KW-0805">Transcription regulation</keyword>
<keyword id="KW-0832">Ubl conjugation</keyword>
<sequence>MAVTLDKDAYYRRVKRLYSNWRKGEDEYASIDAIVVSVGVDEEIVYAKSTALQTWLFGYELTDTIMVFCDDKIIFMASKKKVEFLKQIANTKGNENANGAPAITLLVREKNESNKSSFDKMIDAIKESKSGKKIGVFSKDKFPGEFMKSWSDCLNKEGFDKVDISAVVAYTIAVKEDGELNLMKKAASITSEVFNKFFKERVMEIVDADEKVRHSKLAESVEKAIEEKKYLAGADPSTVEMCYPPIIQSGGNYNLKFSVVSDKNHMHFGAITCAMGIRFKSYCSNLVRTLMVDPTQEVQENYNFLLQLQEELLKELRHGVKICDVYNSVMDVVKKQKPELLNKITKNLGFGMGIEFREGSLVINSKNQYKLKKGMVFSINLGFSDLTNKEGKKPEEKTYALFIGDTVLVDEDGPATILTSVKKKVKNVGIFLKNEDDEEEEEEKDEAEDLLGRGSRAALLTERTRNEMTAEEKRRAHQKELAAQLNEEAKRRLTEQKGEQQIQKARKSNVSYKNPSLMPKEPHIREMKIYIDKKYETVIMPVFGIATPFHIATIKNISMSVEGDYTYLRINFYCPGSALGRNEGNIFPNPEATFVKEITYRASNMKAPGEQTVPALNLQNAFRIIKEVQKRYKTREAEEKEKEGIVKQDSLVINLNRSNPKLKDLYIRPNIAQKRMQGSLEAHVNGFRFTSVRGDKVDILYNNIKHALFQPCDGEMIIVLHFHLKNAVMFGKKRHTDVQFYTEVGEITTDLGKHQHMHDRDDLYAEQMEREMRHKLKTAFKNFIEKVEALTKEELEFEVPFRDLGFNGAPYRSTCLLQPTSSALVNATEWPPFVVTLDEVELIHFERVQFHLKNFDMVIVYKDYSKKVTMINAIPVASLDPIKEWLNSCDLKYTEGVQSLNWTKIMKTIVDDPEGFFEQGGWSFLEPEGEGSDAEDGDSESEIEDETFNPSEDDYEEEEEDSDEDYSSEAEESDYSKESLGSEEESGKDWDELEEEARKADRESRYEEEEEQSRSMSRKRKASVHSSGRGSNRGSRHSSAPPKKKRK</sequence>
<name>SP16H_MOUSE</name>
<gene>
    <name type="primary">Supt16h</name>
    <name type="synonym">Fact140</name>
    <name type="synonym">Factp140</name>
    <name type="synonym">Supt16</name>
</gene>